<accession>P35045</accession>
<name>TRYA_MANSE</name>
<dbReference type="EC" id="3.4.21.4"/>
<dbReference type="EMBL" id="L16805">
    <property type="protein sequence ID" value="AAA29339.1"/>
    <property type="molecule type" value="mRNA"/>
</dbReference>
<dbReference type="PIR" id="T10109">
    <property type="entry name" value="T10109"/>
</dbReference>
<dbReference type="SMR" id="P35045"/>
<dbReference type="MEROPS" id="S01.420"/>
<dbReference type="OrthoDB" id="9425590at2759"/>
<dbReference type="BRENDA" id="3.4.21.4">
    <property type="organism ID" value="3173"/>
</dbReference>
<dbReference type="GO" id="GO:0005576">
    <property type="term" value="C:extracellular region"/>
    <property type="evidence" value="ECO:0007669"/>
    <property type="project" value="UniProtKB-SubCell"/>
</dbReference>
<dbReference type="GO" id="GO:0004252">
    <property type="term" value="F:serine-type endopeptidase activity"/>
    <property type="evidence" value="ECO:0007669"/>
    <property type="project" value="UniProtKB-EC"/>
</dbReference>
<dbReference type="GO" id="GO:0006508">
    <property type="term" value="P:proteolysis"/>
    <property type="evidence" value="ECO:0007669"/>
    <property type="project" value="UniProtKB-KW"/>
</dbReference>
<dbReference type="CDD" id="cd00190">
    <property type="entry name" value="Tryp_SPc"/>
    <property type="match status" value="1"/>
</dbReference>
<dbReference type="FunFam" id="2.40.10.10:FF:000047">
    <property type="entry name" value="Trypsin eta"/>
    <property type="match status" value="1"/>
</dbReference>
<dbReference type="Gene3D" id="2.40.10.10">
    <property type="entry name" value="Trypsin-like serine proteases"/>
    <property type="match status" value="1"/>
</dbReference>
<dbReference type="InterPro" id="IPR050430">
    <property type="entry name" value="Peptidase_S1"/>
</dbReference>
<dbReference type="InterPro" id="IPR009003">
    <property type="entry name" value="Peptidase_S1_PA"/>
</dbReference>
<dbReference type="InterPro" id="IPR043504">
    <property type="entry name" value="Peptidase_S1_PA_chymotrypsin"/>
</dbReference>
<dbReference type="InterPro" id="IPR001314">
    <property type="entry name" value="Peptidase_S1A"/>
</dbReference>
<dbReference type="InterPro" id="IPR001254">
    <property type="entry name" value="Trypsin_dom"/>
</dbReference>
<dbReference type="InterPro" id="IPR018114">
    <property type="entry name" value="TRYPSIN_HIS"/>
</dbReference>
<dbReference type="InterPro" id="IPR033116">
    <property type="entry name" value="TRYPSIN_SER"/>
</dbReference>
<dbReference type="PANTHER" id="PTHR24276:SF91">
    <property type="entry name" value="AT26814P-RELATED"/>
    <property type="match status" value="1"/>
</dbReference>
<dbReference type="PANTHER" id="PTHR24276">
    <property type="entry name" value="POLYSERASE-RELATED"/>
    <property type="match status" value="1"/>
</dbReference>
<dbReference type="Pfam" id="PF00089">
    <property type="entry name" value="Trypsin"/>
    <property type="match status" value="1"/>
</dbReference>
<dbReference type="PRINTS" id="PR00722">
    <property type="entry name" value="CHYMOTRYPSIN"/>
</dbReference>
<dbReference type="SMART" id="SM00020">
    <property type="entry name" value="Tryp_SPc"/>
    <property type="match status" value="1"/>
</dbReference>
<dbReference type="SUPFAM" id="SSF50494">
    <property type="entry name" value="Trypsin-like serine proteases"/>
    <property type="match status" value="1"/>
</dbReference>
<dbReference type="PROSITE" id="PS50240">
    <property type="entry name" value="TRYPSIN_DOM"/>
    <property type="match status" value="1"/>
</dbReference>
<dbReference type="PROSITE" id="PS00134">
    <property type="entry name" value="TRYPSIN_HIS"/>
    <property type="match status" value="1"/>
</dbReference>
<dbReference type="PROSITE" id="PS00135">
    <property type="entry name" value="TRYPSIN_SER"/>
    <property type="match status" value="1"/>
</dbReference>
<sequence>MRLFLALLALGFAAVAAVPAYPQRIVGGSTTTIQQYPTIVALLFSRNGNTFFQACGGIILNNRNVLTAAHCPHGDAVNRWRVRSGSTYANSGGAVHNLNRVRIHPNFNRRTLDNDIAIMRTTSNIAFNNAAQPARIAGANYNLGDNQVVWAAGWGAIRSGGPSSEQLRHVQVWTVNQATCRSRYASIGRSVTDNMLCSGWLDVGGRDQCQGDSGGPLYHNGVVVGVCSWGEECALARFPGVNARVSRFANWIRNNS</sequence>
<organism>
    <name type="scientific">Manduca sexta</name>
    <name type="common">Tobacco hawkmoth</name>
    <name type="synonym">Tobacco hornworm</name>
    <dbReference type="NCBI Taxonomy" id="7130"/>
    <lineage>
        <taxon>Eukaryota</taxon>
        <taxon>Metazoa</taxon>
        <taxon>Ecdysozoa</taxon>
        <taxon>Arthropoda</taxon>
        <taxon>Hexapoda</taxon>
        <taxon>Insecta</taxon>
        <taxon>Pterygota</taxon>
        <taxon>Neoptera</taxon>
        <taxon>Endopterygota</taxon>
        <taxon>Lepidoptera</taxon>
        <taxon>Glossata</taxon>
        <taxon>Ditrysia</taxon>
        <taxon>Bombycoidea</taxon>
        <taxon>Sphingidae</taxon>
        <taxon>Sphinginae</taxon>
        <taxon>Sphingini</taxon>
        <taxon>Manduca</taxon>
    </lineage>
</organism>
<comment type="catalytic activity">
    <reaction>
        <text>Preferential cleavage: Arg-|-Xaa, Lys-|-Xaa.</text>
        <dbReference type="EC" id="3.4.21.4"/>
    </reaction>
</comment>
<comment type="subcellular location">
    <subcellularLocation>
        <location>Secreted</location>
        <location>Extracellular space</location>
    </subcellularLocation>
</comment>
<comment type="tissue specificity">
    <text>Midgut.</text>
</comment>
<comment type="similarity">
    <text evidence="3">Belongs to the peptidase S1 family.</text>
</comment>
<protein>
    <recommendedName>
        <fullName>Trypsin, alkaline A</fullName>
        <ecNumber>3.4.21.4</ecNumber>
    </recommendedName>
</protein>
<reference key="1">
    <citation type="journal article" date="1994" name="Insect Biochem. Mol. Biol.">
        <title>Sequence of three cDNAs encoding an alkaline midgut trypsin from Manduca sexta.</title>
        <authorList>
            <person name="Peterson A.M."/>
            <person name="Barillas-Mury C.V."/>
            <person name="Wells M.A."/>
        </authorList>
    </citation>
    <scope>NUCLEOTIDE SEQUENCE [MRNA]</scope>
    <source>
        <tissue>Midgut</tissue>
    </source>
</reference>
<proteinExistence type="evidence at transcript level"/>
<feature type="signal peptide" evidence="2">
    <location>
        <begin position="1"/>
        <end position="17"/>
    </location>
</feature>
<feature type="propeptide" id="PRO_0000028291" description="Activation peptide">
    <location>
        <begin position="18"/>
        <end position="24"/>
    </location>
</feature>
<feature type="chain" id="PRO_0000028292" description="Trypsin, alkaline A">
    <location>
        <begin position="25"/>
        <end position="256"/>
    </location>
</feature>
<feature type="domain" description="Peptidase S1" evidence="3">
    <location>
        <begin position="25"/>
        <end position="256"/>
    </location>
</feature>
<feature type="active site" description="Charge relay system" evidence="1">
    <location>
        <position position="70"/>
    </location>
</feature>
<feature type="active site" description="Charge relay system" evidence="1">
    <location>
        <position position="115"/>
    </location>
</feature>
<feature type="active site" description="Charge relay system" evidence="1">
    <location>
        <position position="213"/>
    </location>
</feature>
<feature type="site" description="Required for specificity" evidence="1">
    <location>
        <position position="207"/>
    </location>
</feature>
<feature type="disulfide bond" evidence="3">
    <location>
        <begin position="55"/>
        <end position="71"/>
    </location>
</feature>
<feature type="disulfide bond" evidence="3">
    <location>
        <begin position="180"/>
        <end position="197"/>
    </location>
</feature>
<feature type="disulfide bond" evidence="3">
    <location>
        <begin position="209"/>
        <end position="233"/>
    </location>
</feature>
<evidence type="ECO:0000250" key="1"/>
<evidence type="ECO:0000255" key="2"/>
<evidence type="ECO:0000255" key="3">
    <source>
        <dbReference type="PROSITE-ProRule" id="PRU00274"/>
    </source>
</evidence>
<keyword id="KW-1015">Disulfide bond</keyword>
<keyword id="KW-0378">Hydrolase</keyword>
<keyword id="KW-0645">Protease</keyword>
<keyword id="KW-0964">Secreted</keyword>
<keyword id="KW-0720">Serine protease</keyword>
<keyword id="KW-0732">Signal</keyword>
<keyword id="KW-0865">Zymogen</keyword>